<protein>
    <recommendedName>
        <fullName evidence="1">Ubiquinone biosynthesis O-methyltransferase</fullName>
    </recommendedName>
    <alternativeName>
        <fullName evidence="1">2-polyprenyl-6-hydroxyphenol methylase</fullName>
        <ecNumber evidence="1">2.1.1.222</ecNumber>
    </alternativeName>
    <alternativeName>
        <fullName evidence="1">3-demethylubiquinone 3-O-methyltransferase</fullName>
        <ecNumber evidence="1">2.1.1.64</ecNumber>
    </alternativeName>
</protein>
<reference key="1">
    <citation type="journal article" date="2011" name="J. Bacteriol.">
        <title>Comparative genomics of 28 Salmonella enterica isolates: evidence for CRISPR-mediated adaptive sublineage evolution.</title>
        <authorList>
            <person name="Fricke W.F."/>
            <person name="Mammel M.K."/>
            <person name="McDermott P.F."/>
            <person name="Tartera C."/>
            <person name="White D.G."/>
            <person name="Leclerc J.E."/>
            <person name="Ravel J."/>
            <person name="Cebula T.A."/>
        </authorList>
    </citation>
    <scope>NUCLEOTIDE SEQUENCE [LARGE SCALE GENOMIC DNA]</scope>
    <source>
        <strain>CT_02021853</strain>
    </source>
</reference>
<dbReference type="EC" id="2.1.1.222" evidence="1"/>
<dbReference type="EC" id="2.1.1.64" evidence="1"/>
<dbReference type="EMBL" id="CP001144">
    <property type="protein sequence ID" value="ACH75154.1"/>
    <property type="molecule type" value="Genomic_DNA"/>
</dbReference>
<dbReference type="RefSeq" id="WP_001091009.1">
    <property type="nucleotide sequence ID" value="NC_011205.1"/>
</dbReference>
<dbReference type="SMR" id="B5FNR7"/>
<dbReference type="KEGG" id="sed:SeD_A2620"/>
<dbReference type="HOGENOM" id="CLU_042432_5_0_6"/>
<dbReference type="UniPathway" id="UPA00232"/>
<dbReference type="Proteomes" id="UP000008322">
    <property type="component" value="Chromosome"/>
</dbReference>
<dbReference type="GO" id="GO:0102208">
    <property type="term" value="F:2-polyprenyl-6-hydroxyphenol methylase activity"/>
    <property type="evidence" value="ECO:0007669"/>
    <property type="project" value="UniProtKB-EC"/>
</dbReference>
<dbReference type="GO" id="GO:0061542">
    <property type="term" value="F:3-demethylubiquinol 3-O-methyltransferase activity"/>
    <property type="evidence" value="ECO:0007669"/>
    <property type="project" value="UniProtKB-UniRule"/>
</dbReference>
<dbReference type="GO" id="GO:0010420">
    <property type="term" value="F:polyprenyldihydroxybenzoate methyltransferase activity"/>
    <property type="evidence" value="ECO:0007669"/>
    <property type="project" value="InterPro"/>
</dbReference>
<dbReference type="GO" id="GO:0032259">
    <property type="term" value="P:methylation"/>
    <property type="evidence" value="ECO:0007669"/>
    <property type="project" value="UniProtKB-KW"/>
</dbReference>
<dbReference type="CDD" id="cd02440">
    <property type="entry name" value="AdoMet_MTases"/>
    <property type="match status" value="1"/>
</dbReference>
<dbReference type="FunFam" id="3.40.50.150:FF:000028">
    <property type="entry name" value="Ubiquinone biosynthesis O-methyltransferase"/>
    <property type="match status" value="1"/>
</dbReference>
<dbReference type="Gene3D" id="3.40.50.150">
    <property type="entry name" value="Vaccinia Virus protein VP39"/>
    <property type="match status" value="1"/>
</dbReference>
<dbReference type="HAMAP" id="MF_00472">
    <property type="entry name" value="UbiG"/>
    <property type="match status" value="1"/>
</dbReference>
<dbReference type="InterPro" id="IPR029063">
    <property type="entry name" value="SAM-dependent_MTases_sf"/>
</dbReference>
<dbReference type="InterPro" id="IPR010233">
    <property type="entry name" value="UbiG_MeTrfase"/>
</dbReference>
<dbReference type="NCBIfam" id="TIGR01983">
    <property type="entry name" value="UbiG"/>
    <property type="match status" value="1"/>
</dbReference>
<dbReference type="PANTHER" id="PTHR43464">
    <property type="entry name" value="METHYLTRANSFERASE"/>
    <property type="match status" value="1"/>
</dbReference>
<dbReference type="PANTHER" id="PTHR43464:SF19">
    <property type="entry name" value="UBIQUINONE BIOSYNTHESIS O-METHYLTRANSFERASE, MITOCHONDRIAL"/>
    <property type="match status" value="1"/>
</dbReference>
<dbReference type="Pfam" id="PF13489">
    <property type="entry name" value="Methyltransf_23"/>
    <property type="match status" value="1"/>
</dbReference>
<dbReference type="SUPFAM" id="SSF53335">
    <property type="entry name" value="S-adenosyl-L-methionine-dependent methyltransferases"/>
    <property type="match status" value="1"/>
</dbReference>
<proteinExistence type="inferred from homology"/>
<keyword id="KW-0489">Methyltransferase</keyword>
<keyword id="KW-0949">S-adenosyl-L-methionine</keyword>
<keyword id="KW-0808">Transferase</keyword>
<keyword id="KW-0831">Ubiquinone biosynthesis</keyword>
<feature type="chain" id="PRO_1000199696" description="Ubiquinone biosynthesis O-methyltransferase">
    <location>
        <begin position="1"/>
        <end position="242"/>
    </location>
</feature>
<feature type="binding site" evidence="1">
    <location>
        <position position="44"/>
    </location>
    <ligand>
        <name>S-adenosyl-L-methionine</name>
        <dbReference type="ChEBI" id="CHEBI:59789"/>
    </ligand>
</feature>
<feature type="binding site" evidence="1">
    <location>
        <position position="64"/>
    </location>
    <ligand>
        <name>S-adenosyl-L-methionine</name>
        <dbReference type="ChEBI" id="CHEBI:59789"/>
    </ligand>
</feature>
<feature type="binding site" evidence="1">
    <location>
        <position position="85"/>
    </location>
    <ligand>
        <name>S-adenosyl-L-methionine</name>
        <dbReference type="ChEBI" id="CHEBI:59789"/>
    </ligand>
</feature>
<feature type="binding site" evidence="1">
    <location>
        <position position="129"/>
    </location>
    <ligand>
        <name>S-adenosyl-L-methionine</name>
        <dbReference type="ChEBI" id="CHEBI:59789"/>
    </ligand>
</feature>
<comment type="function">
    <text evidence="1">O-methyltransferase that catalyzes the 2 O-methylation steps in the ubiquinone biosynthetic pathway.</text>
</comment>
<comment type="catalytic activity">
    <reaction evidence="1">
        <text>a 3-demethylubiquinol + S-adenosyl-L-methionine = a ubiquinol + S-adenosyl-L-homocysteine + H(+)</text>
        <dbReference type="Rhea" id="RHEA:44380"/>
        <dbReference type="Rhea" id="RHEA-COMP:9566"/>
        <dbReference type="Rhea" id="RHEA-COMP:10914"/>
        <dbReference type="ChEBI" id="CHEBI:15378"/>
        <dbReference type="ChEBI" id="CHEBI:17976"/>
        <dbReference type="ChEBI" id="CHEBI:57856"/>
        <dbReference type="ChEBI" id="CHEBI:59789"/>
        <dbReference type="ChEBI" id="CHEBI:84422"/>
        <dbReference type="EC" id="2.1.1.64"/>
    </reaction>
</comment>
<comment type="catalytic activity">
    <reaction evidence="1">
        <text>a 3-(all-trans-polyprenyl)benzene-1,2-diol + S-adenosyl-L-methionine = a 2-methoxy-6-(all-trans-polyprenyl)phenol + S-adenosyl-L-homocysteine + H(+)</text>
        <dbReference type="Rhea" id="RHEA:31411"/>
        <dbReference type="Rhea" id="RHEA-COMP:9550"/>
        <dbReference type="Rhea" id="RHEA-COMP:9551"/>
        <dbReference type="ChEBI" id="CHEBI:15378"/>
        <dbReference type="ChEBI" id="CHEBI:57856"/>
        <dbReference type="ChEBI" id="CHEBI:59789"/>
        <dbReference type="ChEBI" id="CHEBI:62729"/>
        <dbReference type="ChEBI" id="CHEBI:62731"/>
        <dbReference type="EC" id="2.1.1.222"/>
    </reaction>
</comment>
<comment type="pathway">
    <text evidence="1">Cofactor biosynthesis; ubiquinone biosynthesis.</text>
</comment>
<comment type="similarity">
    <text evidence="1">Belongs to the methyltransferase superfamily. UbiG/COQ3 family.</text>
</comment>
<evidence type="ECO:0000255" key="1">
    <source>
        <dbReference type="HAMAP-Rule" id="MF_00472"/>
    </source>
</evidence>
<name>UBIG_SALDC</name>
<gene>
    <name evidence="1" type="primary">ubiG</name>
    <name type="ordered locus">SeD_A2620</name>
</gene>
<sequence length="242" mass="26854">MNTEKPSVAHNVDHNEIAKFEAVASRWWDLEGEFKPLHRINPLRLGYITERSGGLFGKKVLDVGCGGGILAESMAREGATVTGLDMGFEPLQVAKLHALESGIEVEYVQETVEEHAAKHAQQYDVVTCMEMLEHVPDPQSVVHACAQLVKPGGEVFFSTLNRNGKSWLMAVVGAEYILRMVPKGTHDVKKFIKPAELLSWVDETVLKEQHITGLHYNPITNTFKLGPGVDVNYMLHTRAKKA</sequence>
<organism>
    <name type="scientific">Salmonella dublin (strain CT_02021853)</name>
    <dbReference type="NCBI Taxonomy" id="439851"/>
    <lineage>
        <taxon>Bacteria</taxon>
        <taxon>Pseudomonadati</taxon>
        <taxon>Pseudomonadota</taxon>
        <taxon>Gammaproteobacteria</taxon>
        <taxon>Enterobacterales</taxon>
        <taxon>Enterobacteriaceae</taxon>
        <taxon>Salmonella</taxon>
    </lineage>
</organism>
<accession>B5FNR7</accession>